<keyword id="KW-0963">Cytoplasm</keyword>
<keyword id="KW-0269">Exonuclease</keyword>
<keyword id="KW-0378">Hydrolase</keyword>
<keyword id="KW-0540">Nuclease</keyword>
<feature type="chain" id="PRO_0000303805" description="Exodeoxyribonuclease 7 large subunit">
    <location>
        <begin position="1"/>
        <end position="451"/>
    </location>
</feature>
<proteinExistence type="inferred from homology"/>
<accession>A1KUI5</accession>
<evidence type="ECO:0000255" key="1">
    <source>
        <dbReference type="HAMAP-Rule" id="MF_00378"/>
    </source>
</evidence>
<sequence>MSDFFHSDVLSVSELNAFAKSILENHLAGLWIAGEVSNLTRAASGHYYFSLKDSRAQVRCAMFKGAAARLAKPLKEGDHIEVAGKISIYETRGEFQITVNEVRLKGLGQLYEAYERLKAQLQAEGAFAAERKKPLPARPQCIGIVTSLAAAALRDVVTTLKRRAPEIPVIVYPTPVQGTGSELQIAQAIKTASQRAECDVLIVCRGGGSIEDLWAFNEEPVVRAIEACTVPVVSGVGHETDFTLADFVADVRAPTPTGAAELVSPNRQESLHRLAQAQGRLKTVLEQRYFDASQKLDWLARQIRHPRQKLDEQRASIGKLAQTLSYSMKQNLRAHTARFERQTQALQHYRPDVSVCKNNIVRLQTALPAAFSQLLTHRRQSLTAQAALLEAVSPQHILERGFSVVKDTRGQVIRNADVLKQGQKLHITFADGETDVRVSKEQGQQDLFDCI</sequence>
<comment type="function">
    <text evidence="1">Bidirectionally degrades single-stranded DNA into large acid-insoluble oligonucleotides, which are then degraded further into small acid-soluble oligonucleotides.</text>
</comment>
<comment type="catalytic activity">
    <reaction evidence="1">
        <text>Exonucleolytic cleavage in either 5'- to 3'- or 3'- to 5'-direction to yield nucleoside 5'-phosphates.</text>
        <dbReference type="EC" id="3.1.11.6"/>
    </reaction>
</comment>
<comment type="subunit">
    <text evidence="1">Heterooligomer composed of large and small subunits.</text>
</comment>
<comment type="subcellular location">
    <subcellularLocation>
        <location evidence="1">Cytoplasm</location>
    </subcellularLocation>
</comment>
<comment type="similarity">
    <text evidence="1">Belongs to the XseA family.</text>
</comment>
<name>EX7L_NEIMF</name>
<protein>
    <recommendedName>
        <fullName evidence="1">Exodeoxyribonuclease 7 large subunit</fullName>
        <ecNumber evidence="1">3.1.11.6</ecNumber>
    </recommendedName>
    <alternativeName>
        <fullName evidence="1">Exodeoxyribonuclease VII large subunit</fullName>
        <shortName evidence="1">Exonuclease VII large subunit</shortName>
    </alternativeName>
</protein>
<organism>
    <name type="scientific">Neisseria meningitidis serogroup C / serotype 2a (strain ATCC 700532 / DSM 15464 / FAM18)</name>
    <dbReference type="NCBI Taxonomy" id="272831"/>
    <lineage>
        <taxon>Bacteria</taxon>
        <taxon>Pseudomonadati</taxon>
        <taxon>Pseudomonadota</taxon>
        <taxon>Betaproteobacteria</taxon>
        <taxon>Neisseriales</taxon>
        <taxon>Neisseriaceae</taxon>
        <taxon>Neisseria</taxon>
    </lineage>
</organism>
<dbReference type="EC" id="3.1.11.6" evidence="1"/>
<dbReference type="EMBL" id="AM421808">
    <property type="protein sequence ID" value="CAM10528.1"/>
    <property type="molecule type" value="Genomic_DNA"/>
</dbReference>
<dbReference type="RefSeq" id="WP_002220833.1">
    <property type="nucleotide sequence ID" value="NC_008767.1"/>
</dbReference>
<dbReference type="SMR" id="A1KUI5"/>
<dbReference type="KEGG" id="nmc:NMC1298"/>
<dbReference type="HOGENOM" id="CLU_023625_3_1_4"/>
<dbReference type="Proteomes" id="UP000002286">
    <property type="component" value="Chromosome"/>
</dbReference>
<dbReference type="GO" id="GO:0005737">
    <property type="term" value="C:cytoplasm"/>
    <property type="evidence" value="ECO:0007669"/>
    <property type="project" value="UniProtKB-SubCell"/>
</dbReference>
<dbReference type="GO" id="GO:0009318">
    <property type="term" value="C:exodeoxyribonuclease VII complex"/>
    <property type="evidence" value="ECO:0007669"/>
    <property type="project" value="InterPro"/>
</dbReference>
<dbReference type="GO" id="GO:0008855">
    <property type="term" value="F:exodeoxyribonuclease VII activity"/>
    <property type="evidence" value="ECO:0007669"/>
    <property type="project" value="UniProtKB-UniRule"/>
</dbReference>
<dbReference type="GO" id="GO:0003676">
    <property type="term" value="F:nucleic acid binding"/>
    <property type="evidence" value="ECO:0007669"/>
    <property type="project" value="InterPro"/>
</dbReference>
<dbReference type="GO" id="GO:0006308">
    <property type="term" value="P:DNA catabolic process"/>
    <property type="evidence" value="ECO:0007669"/>
    <property type="project" value="UniProtKB-UniRule"/>
</dbReference>
<dbReference type="CDD" id="cd04489">
    <property type="entry name" value="ExoVII_LU_OBF"/>
    <property type="match status" value="1"/>
</dbReference>
<dbReference type="Gene3D" id="2.40.50.1010">
    <property type="match status" value="1"/>
</dbReference>
<dbReference type="HAMAP" id="MF_00378">
    <property type="entry name" value="Exonuc_7_L"/>
    <property type="match status" value="1"/>
</dbReference>
<dbReference type="InterPro" id="IPR003753">
    <property type="entry name" value="Exonuc_VII_L"/>
</dbReference>
<dbReference type="InterPro" id="IPR020579">
    <property type="entry name" value="Exonuc_VII_lsu_C"/>
</dbReference>
<dbReference type="InterPro" id="IPR025824">
    <property type="entry name" value="OB-fold_nuc-bd_dom"/>
</dbReference>
<dbReference type="NCBIfam" id="TIGR00237">
    <property type="entry name" value="xseA"/>
    <property type="match status" value="1"/>
</dbReference>
<dbReference type="PANTHER" id="PTHR30008">
    <property type="entry name" value="EXODEOXYRIBONUCLEASE 7 LARGE SUBUNIT"/>
    <property type="match status" value="1"/>
</dbReference>
<dbReference type="PANTHER" id="PTHR30008:SF0">
    <property type="entry name" value="EXODEOXYRIBONUCLEASE 7 LARGE SUBUNIT"/>
    <property type="match status" value="1"/>
</dbReference>
<dbReference type="Pfam" id="PF02601">
    <property type="entry name" value="Exonuc_VII_L"/>
    <property type="match status" value="1"/>
</dbReference>
<dbReference type="Pfam" id="PF13742">
    <property type="entry name" value="tRNA_anti_2"/>
    <property type="match status" value="1"/>
</dbReference>
<gene>
    <name evidence="1" type="primary">xseA</name>
    <name type="ordered locus">NMC1298</name>
</gene>
<reference key="1">
    <citation type="journal article" date="2007" name="PLoS Genet.">
        <title>Meningococcal genetic variation mechanisms viewed through comparative analysis of serogroup C strain FAM18.</title>
        <authorList>
            <person name="Bentley S.D."/>
            <person name="Vernikos G.S."/>
            <person name="Snyder L.A.S."/>
            <person name="Churcher C."/>
            <person name="Arrowsmith C."/>
            <person name="Chillingworth T."/>
            <person name="Cronin A."/>
            <person name="Davis P.H."/>
            <person name="Holroyd N.E."/>
            <person name="Jagels K."/>
            <person name="Maddison M."/>
            <person name="Moule S."/>
            <person name="Rabbinowitsch E."/>
            <person name="Sharp S."/>
            <person name="Unwin L."/>
            <person name="Whitehead S."/>
            <person name="Quail M.A."/>
            <person name="Achtman M."/>
            <person name="Barrell B.G."/>
            <person name="Saunders N.J."/>
            <person name="Parkhill J."/>
        </authorList>
    </citation>
    <scope>NUCLEOTIDE SEQUENCE [LARGE SCALE GENOMIC DNA]</scope>
    <source>
        <strain>ATCC 700532 / DSM 15464 / FAM18</strain>
    </source>
</reference>